<reference key="1">
    <citation type="submission" date="2007-04" db="EMBL/GenBank/DDBJ databases">
        <title>Complete sequence of Pseudomonas mendocina ymp.</title>
        <authorList>
            <consortium name="US DOE Joint Genome Institute"/>
            <person name="Copeland A."/>
            <person name="Lucas S."/>
            <person name="Lapidus A."/>
            <person name="Barry K."/>
            <person name="Glavina del Rio T."/>
            <person name="Dalin E."/>
            <person name="Tice H."/>
            <person name="Pitluck S."/>
            <person name="Kiss H."/>
            <person name="Brettin T."/>
            <person name="Detter J.C."/>
            <person name="Bruce D."/>
            <person name="Han C."/>
            <person name="Schmutz J."/>
            <person name="Larimer F."/>
            <person name="Land M."/>
            <person name="Hauser L."/>
            <person name="Kyrpides N."/>
            <person name="Mikhailova N."/>
            <person name="Hersman L."/>
            <person name="Dubois J."/>
            <person name="Maurice P."/>
            <person name="Richardson P."/>
        </authorList>
    </citation>
    <scope>NUCLEOTIDE SEQUENCE [LARGE SCALE GENOMIC DNA]</scope>
    <source>
        <strain>ymp</strain>
    </source>
</reference>
<name>ORN_ECTM1</name>
<keyword id="KW-0963">Cytoplasm</keyword>
<keyword id="KW-0269">Exonuclease</keyword>
<keyword id="KW-0378">Hydrolase</keyword>
<keyword id="KW-0540">Nuclease</keyword>
<comment type="function">
    <text evidence="1">3'-to-5' exoribonuclease specific for small oligoribonucleotides.</text>
</comment>
<comment type="subcellular location">
    <subcellularLocation>
        <location evidence="1">Cytoplasm</location>
    </subcellularLocation>
</comment>
<comment type="similarity">
    <text evidence="1">Belongs to the oligoribonuclease family.</text>
</comment>
<evidence type="ECO:0000255" key="1">
    <source>
        <dbReference type="HAMAP-Rule" id="MF_00045"/>
    </source>
</evidence>
<protein>
    <recommendedName>
        <fullName evidence="1">Oligoribonuclease</fullName>
        <ecNumber evidence="1">3.1.15.-</ecNumber>
    </recommendedName>
</protein>
<accession>A4XPY0</accession>
<dbReference type="EC" id="3.1.15.-" evidence="1"/>
<dbReference type="EMBL" id="CP000680">
    <property type="protein sequence ID" value="ABP83396.1"/>
    <property type="molecule type" value="Genomic_DNA"/>
</dbReference>
<dbReference type="SMR" id="A4XPY0"/>
<dbReference type="STRING" id="399739.Pmen_0628"/>
<dbReference type="KEGG" id="pmy:Pmen_0628"/>
<dbReference type="PATRIC" id="fig|399739.8.peg.635"/>
<dbReference type="eggNOG" id="COG1949">
    <property type="taxonomic scope" value="Bacteria"/>
</dbReference>
<dbReference type="HOGENOM" id="CLU_064761_2_0_6"/>
<dbReference type="OrthoDB" id="9801329at2"/>
<dbReference type="GO" id="GO:0005737">
    <property type="term" value="C:cytoplasm"/>
    <property type="evidence" value="ECO:0007669"/>
    <property type="project" value="UniProtKB-SubCell"/>
</dbReference>
<dbReference type="GO" id="GO:0000175">
    <property type="term" value="F:3'-5'-RNA exonuclease activity"/>
    <property type="evidence" value="ECO:0007669"/>
    <property type="project" value="InterPro"/>
</dbReference>
<dbReference type="GO" id="GO:0003676">
    <property type="term" value="F:nucleic acid binding"/>
    <property type="evidence" value="ECO:0007669"/>
    <property type="project" value="InterPro"/>
</dbReference>
<dbReference type="GO" id="GO:0006259">
    <property type="term" value="P:DNA metabolic process"/>
    <property type="evidence" value="ECO:0007669"/>
    <property type="project" value="UniProtKB-ARBA"/>
</dbReference>
<dbReference type="CDD" id="cd06135">
    <property type="entry name" value="Orn"/>
    <property type="match status" value="1"/>
</dbReference>
<dbReference type="FunFam" id="3.30.420.10:FF:000003">
    <property type="entry name" value="Oligoribonuclease"/>
    <property type="match status" value="1"/>
</dbReference>
<dbReference type="Gene3D" id="3.30.420.10">
    <property type="entry name" value="Ribonuclease H-like superfamily/Ribonuclease H"/>
    <property type="match status" value="1"/>
</dbReference>
<dbReference type="HAMAP" id="MF_00045">
    <property type="entry name" value="Oligoribonuclease"/>
    <property type="match status" value="1"/>
</dbReference>
<dbReference type="InterPro" id="IPR013520">
    <property type="entry name" value="Exonuclease_RNaseT/DNA_pol3"/>
</dbReference>
<dbReference type="InterPro" id="IPR022894">
    <property type="entry name" value="Oligoribonuclease"/>
</dbReference>
<dbReference type="InterPro" id="IPR012337">
    <property type="entry name" value="RNaseH-like_sf"/>
</dbReference>
<dbReference type="InterPro" id="IPR036397">
    <property type="entry name" value="RNaseH_sf"/>
</dbReference>
<dbReference type="NCBIfam" id="NF003765">
    <property type="entry name" value="PRK05359.1"/>
    <property type="match status" value="1"/>
</dbReference>
<dbReference type="PANTHER" id="PTHR11046">
    <property type="entry name" value="OLIGORIBONUCLEASE, MITOCHONDRIAL"/>
    <property type="match status" value="1"/>
</dbReference>
<dbReference type="PANTHER" id="PTHR11046:SF0">
    <property type="entry name" value="OLIGORIBONUCLEASE, MITOCHONDRIAL"/>
    <property type="match status" value="1"/>
</dbReference>
<dbReference type="Pfam" id="PF00929">
    <property type="entry name" value="RNase_T"/>
    <property type="match status" value="1"/>
</dbReference>
<dbReference type="SMART" id="SM00479">
    <property type="entry name" value="EXOIII"/>
    <property type="match status" value="1"/>
</dbReference>
<dbReference type="SUPFAM" id="SSF53098">
    <property type="entry name" value="Ribonuclease H-like"/>
    <property type="match status" value="1"/>
</dbReference>
<feature type="chain" id="PRO_1000004275" description="Oligoribonuclease">
    <location>
        <begin position="1"/>
        <end position="180"/>
    </location>
</feature>
<feature type="domain" description="Exonuclease" evidence="1">
    <location>
        <begin position="7"/>
        <end position="170"/>
    </location>
</feature>
<feature type="active site" evidence="1">
    <location>
        <position position="128"/>
    </location>
</feature>
<organism>
    <name type="scientific">Ectopseudomonas mendocina (strain ymp)</name>
    <name type="common">Pseudomonas mendocina</name>
    <dbReference type="NCBI Taxonomy" id="399739"/>
    <lineage>
        <taxon>Bacteria</taxon>
        <taxon>Pseudomonadati</taxon>
        <taxon>Pseudomonadota</taxon>
        <taxon>Gammaproteobacteria</taxon>
        <taxon>Pseudomonadales</taxon>
        <taxon>Pseudomonadaceae</taxon>
        <taxon>Ectopseudomonas</taxon>
    </lineage>
</organism>
<proteinExistence type="inferred from homology"/>
<sequence>MQNPNNLIWIDLEMTGLEPERDVIIEMATIVTDSELNVLAEGPVIAIHQSDETLAGMDEWNTRTHGQSGLTQRVRESRIDTATAEAQTIAFLEQWVPKGKSPICGNSIGQDRRFLYKYMPALEAYFHYRYLDVSTLKILAGMWAPQVKDSFQKTATHQALDDIRESIAELKHYRQHFLKA</sequence>
<gene>
    <name evidence="1" type="primary">orn</name>
    <name type="ordered locus">Pmen_0628</name>
</gene>